<reference key="1">
    <citation type="journal article" date="2001" name="Proc. Natl. Acad. Sci. U.S.A.">
        <title>Complete genomic sequence of Pasteurella multocida Pm70.</title>
        <authorList>
            <person name="May B.J."/>
            <person name="Zhang Q."/>
            <person name="Li L.L."/>
            <person name="Paustian M.L."/>
            <person name="Whittam T.S."/>
            <person name="Kapur V."/>
        </authorList>
    </citation>
    <scope>NUCLEOTIDE SEQUENCE [LARGE SCALE GENOMIC DNA]</scope>
    <source>
        <strain>Pm70</strain>
    </source>
</reference>
<accession>Q9CMZ3</accession>
<name>Y657_PASMU</name>
<keyword id="KW-1185">Reference proteome</keyword>
<proteinExistence type="predicted"/>
<feature type="chain" id="PRO_0000216302" description="Uncharacterized protein PM0657">
    <location>
        <begin position="1"/>
        <end position="360"/>
    </location>
</feature>
<comment type="similarity">
    <text evidence="1">To P.multocida PM1082.</text>
</comment>
<gene>
    <name type="ordered locus">PM0657</name>
</gene>
<protein>
    <recommendedName>
        <fullName>Uncharacterized protein PM0657</fullName>
    </recommendedName>
</protein>
<sequence length="360" mass="41836">MYDYILNALVKIEAYLDNESDSVEIPNNLFKTDILVDYYYYPGHFVDVDDDEKELIAATLTDAGYADHYDALAELLWKANIEPIPKEELVDGNSYCFIMISFGITPVQAHLKAKKAKYEQVTFFCLPYTDREGEQRFKILVVPNTFGSIFKEMKCACLLDIESEEQLDKTYWSLLERAIGQICQTLSIDVTGFALSDTTYQQKTLETYSPYLTQFCQLTQIQNIEGFKARWLEIQQQQKQLIQQVKDEGFYGTVKPAFLNYRFLLCEFLTSTYEDHWQMDYDALFDYLAKYLEQPFELDEEDGLQPNDIARKVEAESNYSLLDIETRLESYCFLPCLKTDVESILNLAEILDFPMSKLGD</sequence>
<organism>
    <name type="scientific">Pasteurella multocida (strain Pm70)</name>
    <dbReference type="NCBI Taxonomy" id="272843"/>
    <lineage>
        <taxon>Bacteria</taxon>
        <taxon>Pseudomonadati</taxon>
        <taxon>Pseudomonadota</taxon>
        <taxon>Gammaproteobacteria</taxon>
        <taxon>Pasteurellales</taxon>
        <taxon>Pasteurellaceae</taxon>
        <taxon>Pasteurella</taxon>
    </lineage>
</organism>
<dbReference type="EMBL" id="AE004439">
    <property type="protein sequence ID" value="AAK02741.1"/>
    <property type="molecule type" value="Genomic_DNA"/>
</dbReference>
<dbReference type="RefSeq" id="WP_010906777.1">
    <property type="nucleotide sequence ID" value="NC_002663.1"/>
</dbReference>
<dbReference type="EnsemblBacteria" id="AAK02741">
    <property type="protein sequence ID" value="AAK02741"/>
    <property type="gene ID" value="PM0657"/>
</dbReference>
<dbReference type="KEGG" id="pmu:PM0657"/>
<dbReference type="PATRIC" id="fig|272843.6.peg.665"/>
<dbReference type="HOGENOM" id="CLU_769137_0_0_6"/>
<dbReference type="OrthoDB" id="5676925at2"/>
<dbReference type="Proteomes" id="UP000000809">
    <property type="component" value="Chromosome"/>
</dbReference>
<dbReference type="InterPro" id="IPR056723">
    <property type="entry name" value="DUF7821"/>
</dbReference>
<dbReference type="Pfam" id="PF25134">
    <property type="entry name" value="DUF7821"/>
    <property type="match status" value="1"/>
</dbReference>
<evidence type="ECO:0000305" key="1"/>